<sequence length="119" mass="13107">MINPNPKRSDEPVFWGLFGAGGMWSAIIAPVMILLVGILLPLGLFPGDALSYERVLAFAQSFIGRVFLFLMIVLPLWCGLHRMHHAMHDLKIHVPAGKWVFYGLAAILTVVTLIGVVTI</sequence>
<gene>
    <name evidence="1" type="primary">frdD</name>
    <name type="ordered locus">SFV_4310</name>
</gene>
<keyword id="KW-0997">Cell inner membrane</keyword>
<keyword id="KW-1003">Cell membrane</keyword>
<keyword id="KW-0472">Membrane</keyword>
<keyword id="KW-0812">Transmembrane</keyword>
<keyword id="KW-1133">Transmembrane helix</keyword>
<accession>Q0SXC5</accession>
<comment type="function">
    <text evidence="1">Two distinct, membrane-bound, FAD-containing enzymes are responsible for the catalysis of fumarate and succinate interconversion; fumarate reductase is used in anaerobic growth, and succinate dehydrogenase is used in aerobic growth. Anchors the catalytic components of the fumarate reductase complex to the cell inner membrane, binds quinones.</text>
</comment>
<comment type="subunit">
    <text evidence="1">Part of an enzyme complex containing four subunits: a flavoprotein (FrdA), an iron-sulfur protein (FrdB), and two hydrophobic anchor proteins (FrdC and FrdD).</text>
</comment>
<comment type="subcellular location">
    <subcellularLocation>
        <location evidence="1">Cell inner membrane</location>
        <topology evidence="1">Multi-pass membrane protein</topology>
    </subcellularLocation>
</comment>
<comment type="similarity">
    <text evidence="1">Belongs to the FrdD family.</text>
</comment>
<organism>
    <name type="scientific">Shigella flexneri serotype 5b (strain 8401)</name>
    <dbReference type="NCBI Taxonomy" id="373384"/>
    <lineage>
        <taxon>Bacteria</taxon>
        <taxon>Pseudomonadati</taxon>
        <taxon>Pseudomonadota</taxon>
        <taxon>Gammaproteobacteria</taxon>
        <taxon>Enterobacterales</taxon>
        <taxon>Enterobacteriaceae</taxon>
        <taxon>Shigella</taxon>
    </lineage>
</organism>
<protein>
    <recommendedName>
        <fullName evidence="1">Fumarate reductase subunit D</fullName>
    </recommendedName>
    <alternativeName>
        <fullName evidence="1">Fumarate reductase 13 kDa hydrophobic protein</fullName>
    </alternativeName>
    <alternativeName>
        <fullName evidence="1">Quinol-fumarate reductase subunit D</fullName>
        <shortName evidence="1">QFR subunit D</shortName>
    </alternativeName>
</protein>
<evidence type="ECO:0000255" key="1">
    <source>
        <dbReference type="HAMAP-Rule" id="MF_00709"/>
    </source>
</evidence>
<dbReference type="EMBL" id="CP000266">
    <property type="protein sequence ID" value="ABF06290.1"/>
    <property type="molecule type" value="Genomic_DNA"/>
</dbReference>
<dbReference type="RefSeq" id="WP_000609663.1">
    <property type="nucleotide sequence ID" value="NC_008258.1"/>
</dbReference>
<dbReference type="SMR" id="Q0SXC5"/>
<dbReference type="GeneID" id="75169672"/>
<dbReference type="KEGG" id="sfv:SFV_4310"/>
<dbReference type="HOGENOM" id="CLU_168367_0_0_6"/>
<dbReference type="Proteomes" id="UP000000659">
    <property type="component" value="Chromosome"/>
</dbReference>
<dbReference type="GO" id="GO:0045283">
    <property type="term" value="C:fumarate reductase complex"/>
    <property type="evidence" value="ECO:0007669"/>
    <property type="project" value="UniProtKB-UniRule"/>
</dbReference>
<dbReference type="GO" id="GO:0005886">
    <property type="term" value="C:plasma membrane"/>
    <property type="evidence" value="ECO:0007669"/>
    <property type="project" value="UniProtKB-SubCell"/>
</dbReference>
<dbReference type="GO" id="GO:0000104">
    <property type="term" value="F:succinate dehydrogenase activity"/>
    <property type="evidence" value="ECO:0007669"/>
    <property type="project" value="UniProtKB-UniRule"/>
</dbReference>
<dbReference type="GO" id="GO:0006106">
    <property type="term" value="P:fumarate metabolic process"/>
    <property type="evidence" value="ECO:0007669"/>
    <property type="project" value="InterPro"/>
</dbReference>
<dbReference type="CDD" id="cd00547">
    <property type="entry name" value="QFR_TypeD_subunitD"/>
    <property type="match status" value="1"/>
</dbReference>
<dbReference type="FunFam" id="1.20.1300.10:FF:000002">
    <property type="entry name" value="Fumarate reductase subunit D"/>
    <property type="match status" value="1"/>
</dbReference>
<dbReference type="Gene3D" id="1.20.1300.10">
    <property type="entry name" value="Fumarate reductase/succinate dehydrogenase, transmembrane subunit"/>
    <property type="match status" value="1"/>
</dbReference>
<dbReference type="HAMAP" id="MF_00709">
    <property type="entry name" value="Fumarate_red_D"/>
    <property type="match status" value="1"/>
</dbReference>
<dbReference type="InterPro" id="IPR003418">
    <property type="entry name" value="Fumarate_red_D"/>
</dbReference>
<dbReference type="InterPro" id="IPR034804">
    <property type="entry name" value="SQR/QFR_C/D"/>
</dbReference>
<dbReference type="NCBIfam" id="NF003977">
    <property type="entry name" value="PRK05470.1-1"/>
    <property type="match status" value="1"/>
</dbReference>
<dbReference type="Pfam" id="PF02313">
    <property type="entry name" value="Fumarate_red_D"/>
    <property type="match status" value="1"/>
</dbReference>
<dbReference type="PIRSF" id="PIRSF000179">
    <property type="entry name" value="FrdD"/>
    <property type="match status" value="1"/>
</dbReference>
<dbReference type="SUPFAM" id="SSF81343">
    <property type="entry name" value="Fumarate reductase respiratory complex transmembrane subunits"/>
    <property type="match status" value="1"/>
</dbReference>
<proteinExistence type="inferred from homology"/>
<feature type="chain" id="PRO_1000045561" description="Fumarate reductase subunit D">
    <location>
        <begin position="1"/>
        <end position="119"/>
    </location>
</feature>
<feature type="transmembrane region" description="Helical" evidence="1">
    <location>
        <begin position="26"/>
        <end position="46"/>
    </location>
</feature>
<feature type="transmembrane region" description="Helical" evidence="1">
    <location>
        <begin position="55"/>
        <end position="75"/>
    </location>
</feature>
<feature type="transmembrane region" description="Helical" evidence="1">
    <location>
        <begin position="99"/>
        <end position="119"/>
    </location>
</feature>
<name>FRDD_SHIF8</name>
<reference key="1">
    <citation type="journal article" date="2006" name="BMC Genomics">
        <title>Complete genome sequence of Shigella flexneri 5b and comparison with Shigella flexneri 2a.</title>
        <authorList>
            <person name="Nie H."/>
            <person name="Yang F."/>
            <person name="Zhang X."/>
            <person name="Yang J."/>
            <person name="Chen L."/>
            <person name="Wang J."/>
            <person name="Xiong Z."/>
            <person name="Peng J."/>
            <person name="Sun L."/>
            <person name="Dong J."/>
            <person name="Xue Y."/>
            <person name="Xu X."/>
            <person name="Chen S."/>
            <person name="Yao Z."/>
            <person name="Shen Y."/>
            <person name="Jin Q."/>
        </authorList>
    </citation>
    <scope>NUCLEOTIDE SEQUENCE [LARGE SCALE GENOMIC DNA]</scope>
    <source>
        <strain>8401</strain>
    </source>
</reference>